<name>DXS_COLP3</name>
<comment type="function">
    <text evidence="1">Catalyzes the acyloin condensation reaction between C atoms 2 and 3 of pyruvate and glyceraldehyde 3-phosphate to yield 1-deoxy-D-xylulose-5-phosphate (DXP).</text>
</comment>
<comment type="catalytic activity">
    <reaction evidence="1">
        <text>D-glyceraldehyde 3-phosphate + pyruvate + H(+) = 1-deoxy-D-xylulose 5-phosphate + CO2</text>
        <dbReference type="Rhea" id="RHEA:12605"/>
        <dbReference type="ChEBI" id="CHEBI:15361"/>
        <dbReference type="ChEBI" id="CHEBI:15378"/>
        <dbReference type="ChEBI" id="CHEBI:16526"/>
        <dbReference type="ChEBI" id="CHEBI:57792"/>
        <dbReference type="ChEBI" id="CHEBI:59776"/>
        <dbReference type="EC" id="2.2.1.7"/>
    </reaction>
</comment>
<comment type="cofactor">
    <cofactor evidence="1">
        <name>Mg(2+)</name>
        <dbReference type="ChEBI" id="CHEBI:18420"/>
    </cofactor>
    <text evidence="1">Binds 1 Mg(2+) ion per subunit.</text>
</comment>
<comment type="cofactor">
    <cofactor evidence="1">
        <name>thiamine diphosphate</name>
        <dbReference type="ChEBI" id="CHEBI:58937"/>
    </cofactor>
    <text evidence="1">Binds 1 thiamine pyrophosphate per subunit.</text>
</comment>
<comment type="pathway">
    <text evidence="1">Metabolic intermediate biosynthesis; 1-deoxy-D-xylulose 5-phosphate biosynthesis; 1-deoxy-D-xylulose 5-phosphate from D-glyceraldehyde 3-phosphate and pyruvate: step 1/1.</text>
</comment>
<comment type="subunit">
    <text evidence="1">Homodimer.</text>
</comment>
<comment type="similarity">
    <text evidence="1">Belongs to the transketolase family. DXPS subfamily.</text>
</comment>
<protein>
    <recommendedName>
        <fullName evidence="1">1-deoxy-D-xylulose-5-phosphate synthase</fullName>
        <ecNumber evidence="1">2.2.1.7</ecNumber>
    </recommendedName>
    <alternativeName>
        <fullName evidence="1">1-deoxyxylulose-5-phosphate synthase</fullName>
        <shortName evidence="1">DXP synthase</shortName>
        <shortName evidence="1">DXPS</shortName>
    </alternativeName>
</protein>
<feature type="chain" id="PRO_0000256403" description="1-deoxy-D-xylulose-5-phosphate synthase">
    <location>
        <begin position="1"/>
        <end position="630"/>
    </location>
</feature>
<feature type="binding site" evidence="1">
    <location>
        <position position="80"/>
    </location>
    <ligand>
        <name>thiamine diphosphate</name>
        <dbReference type="ChEBI" id="CHEBI:58937"/>
    </ligand>
</feature>
<feature type="binding site" evidence="1">
    <location>
        <begin position="121"/>
        <end position="123"/>
    </location>
    <ligand>
        <name>thiamine diphosphate</name>
        <dbReference type="ChEBI" id="CHEBI:58937"/>
    </ligand>
</feature>
<feature type="binding site" evidence="1">
    <location>
        <position position="152"/>
    </location>
    <ligand>
        <name>Mg(2+)</name>
        <dbReference type="ChEBI" id="CHEBI:18420"/>
    </ligand>
</feature>
<feature type="binding site" evidence="1">
    <location>
        <begin position="153"/>
        <end position="154"/>
    </location>
    <ligand>
        <name>thiamine diphosphate</name>
        <dbReference type="ChEBI" id="CHEBI:58937"/>
    </ligand>
</feature>
<feature type="binding site" evidence="1">
    <location>
        <position position="181"/>
    </location>
    <ligand>
        <name>Mg(2+)</name>
        <dbReference type="ChEBI" id="CHEBI:18420"/>
    </ligand>
</feature>
<feature type="binding site" evidence="1">
    <location>
        <position position="181"/>
    </location>
    <ligand>
        <name>thiamine diphosphate</name>
        <dbReference type="ChEBI" id="CHEBI:58937"/>
    </ligand>
</feature>
<feature type="binding site" evidence="1">
    <location>
        <position position="288"/>
    </location>
    <ligand>
        <name>thiamine diphosphate</name>
        <dbReference type="ChEBI" id="CHEBI:58937"/>
    </ligand>
</feature>
<feature type="binding site" evidence="1">
    <location>
        <position position="370"/>
    </location>
    <ligand>
        <name>thiamine diphosphate</name>
        <dbReference type="ChEBI" id="CHEBI:58937"/>
    </ligand>
</feature>
<accession>Q487D3</accession>
<sequence length="630" mass="68842">MITNLADYPLLSQINIPEDLRNMPQEQLTRISNELRSFLLNSVSKSSGHFASGLGTIELTVALHYVYNTPFDHLIWDVGHQAYPHKILTGRRDQLHTIRQKGGLHPFPWREESEYDTLSVGHSSTSISAALGLAVAAEKEAKNRKTVAVIGDGAMTAGMAFEALNHAGDIKKDMLIILNDNDMSISKNVGALNNHLAKLLSGSIFTGFRESSKKLLGNIPPIKELASRAEEHLKGMVVPSTFFEELGFNYIGPIDGHDVESLVTTIKNMRNLKGPQFLHVVTTKGKGYQAAEQDPIKYHAVPKFNPEETNLPQSKPSLPTYSKIFGDWLCKTAEIDKKLVAVTPAMAEGSGMVEFSQRFPDQYYDVAIAEQHSVTYAAGLAIGGLKPVVAIYSSFLQRGYDQFIHDVAIQNLPVMFAIDRAGIVGADGATHQGVFDLSFLRCIPNTVIMAPSNERECQLMLNTGYKLDGPSVVRYPRGNGTGEILPSVDETIELGKGVTILTATVIESQEQTNKSIAILSFGSMLGEAKKAALELNATLVDMRFVKPLDETLIDTLNAKHDCLVTVEDNAIAGGAGSGVNEYLLAQGKPVTILNIGVTDHFVKHGTQEEMHHELELDAEGIVIKIKRFIN</sequence>
<gene>
    <name evidence="1" type="primary">dxs</name>
    <name type="ordered locus">CPS_1088</name>
</gene>
<keyword id="KW-0414">Isoprene biosynthesis</keyword>
<keyword id="KW-0460">Magnesium</keyword>
<keyword id="KW-0479">Metal-binding</keyword>
<keyword id="KW-0784">Thiamine biosynthesis</keyword>
<keyword id="KW-0786">Thiamine pyrophosphate</keyword>
<keyword id="KW-0808">Transferase</keyword>
<reference key="1">
    <citation type="journal article" date="2005" name="Proc. Natl. Acad. Sci. U.S.A.">
        <title>The psychrophilic lifestyle as revealed by the genome sequence of Colwellia psychrerythraea 34H through genomic and proteomic analyses.</title>
        <authorList>
            <person name="Methe B.A."/>
            <person name="Nelson K.E."/>
            <person name="Deming J.W."/>
            <person name="Momen B."/>
            <person name="Melamud E."/>
            <person name="Zhang X."/>
            <person name="Moult J."/>
            <person name="Madupu R."/>
            <person name="Nelson W.C."/>
            <person name="Dodson R.J."/>
            <person name="Brinkac L.M."/>
            <person name="Daugherty S.C."/>
            <person name="Durkin A.S."/>
            <person name="DeBoy R.T."/>
            <person name="Kolonay J.F."/>
            <person name="Sullivan S.A."/>
            <person name="Zhou L."/>
            <person name="Davidsen T.M."/>
            <person name="Wu M."/>
            <person name="Huston A.L."/>
            <person name="Lewis M."/>
            <person name="Weaver B."/>
            <person name="Weidman J.F."/>
            <person name="Khouri H."/>
            <person name="Utterback T.R."/>
            <person name="Feldblyum T.V."/>
            <person name="Fraser C.M."/>
        </authorList>
    </citation>
    <scope>NUCLEOTIDE SEQUENCE [LARGE SCALE GENOMIC DNA]</scope>
    <source>
        <strain>34H / ATCC BAA-681</strain>
    </source>
</reference>
<dbReference type="EC" id="2.2.1.7" evidence="1"/>
<dbReference type="EMBL" id="CP000083">
    <property type="protein sequence ID" value="AAZ28423.1"/>
    <property type="molecule type" value="Genomic_DNA"/>
</dbReference>
<dbReference type="RefSeq" id="WP_011041926.1">
    <property type="nucleotide sequence ID" value="NC_003910.7"/>
</dbReference>
<dbReference type="SMR" id="Q487D3"/>
<dbReference type="STRING" id="167879.CPS_1088"/>
<dbReference type="KEGG" id="cps:CPS_1088"/>
<dbReference type="eggNOG" id="COG1154">
    <property type="taxonomic scope" value="Bacteria"/>
</dbReference>
<dbReference type="HOGENOM" id="CLU_009227_1_4_6"/>
<dbReference type="UniPathway" id="UPA00064">
    <property type="reaction ID" value="UER00091"/>
</dbReference>
<dbReference type="Proteomes" id="UP000000547">
    <property type="component" value="Chromosome"/>
</dbReference>
<dbReference type="GO" id="GO:0005829">
    <property type="term" value="C:cytosol"/>
    <property type="evidence" value="ECO:0007669"/>
    <property type="project" value="TreeGrafter"/>
</dbReference>
<dbReference type="GO" id="GO:0008661">
    <property type="term" value="F:1-deoxy-D-xylulose-5-phosphate synthase activity"/>
    <property type="evidence" value="ECO:0007669"/>
    <property type="project" value="UniProtKB-UniRule"/>
</dbReference>
<dbReference type="GO" id="GO:0000287">
    <property type="term" value="F:magnesium ion binding"/>
    <property type="evidence" value="ECO:0007669"/>
    <property type="project" value="UniProtKB-UniRule"/>
</dbReference>
<dbReference type="GO" id="GO:0030976">
    <property type="term" value="F:thiamine pyrophosphate binding"/>
    <property type="evidence" value="ECO:0007669"/>
    <property type="project" value="UniProtKB-UniRule"/>
</dbReference>
<dbReference type="GO" id="GO:0052865">
    <property type="term" value="P:1-deoxy-D-xylulose 5-phosphate biosynthetic process"/>
    <property type="evidence" value="ECO:0007669"/>
    <property type="project" value="UniProtKB-UniPathway"/>
</dbReference>
<dbReference type="GO" id="GO:0019288">
    <property type="term" value="P:isopentenyl diphosphate biosynthetic process, methylerythritol 4-phosphate pathway"/>
    <property type="evidence" value="ECO:0007669"/>
    <property type="project" value="TreeGrafter"/>
</dbReference>
<dbReference type="GO" id="GO:0016114">
    <property type="term" value="P:terpenoid biosynthetic process"/>
    <property type="evidence" value="ECO:0007669"/>
    <property type="project" value="UniProtKB-UniRule"/>
</dbReference>
<dbReference type="GO" id="GO:0009228">
    <property type="term" value="P:thiamine biosynthetic process"/>
    <property type="evidence" value="ECO:0007669"/>
    <property type="project" value="UniProtKB-UniRule"/>
</dbReference>
<dbReference type="CDD" id="cd02007">
    <property type="entry name" value="TPP_DXS"/>
    <property type="match status" value="1"/>
</dbReference>
<dbReference type="CDD" id="cd07033">
    <property type="entry name" value="TPP_PYR_DXS_TK_like"/>
    <property type="match status" value="1"/>
</dbReference>
<dbReference type="FunFam" id="3.40.50.920:FF:000002">
    <property type="entry name" value="1-deoxy-D-xylulose-5-phosphate synthase"/>
    <property type="match status" value="1"/>
</dbReference>
<dbReference type="FunFam" id="3.40.50.970:FF:000005">
    <property type="entry name" value="1-deoxy-D-xylulose-5-phosphate synthase"/>
    <property type="match status" value="1"/>
</dbReference>
<dbReference type="Gene3D" id="3.40.50.920">
    <property type="match status" value="1"/>
</dbReference>
<dbReference type="Gene3D" id="3.40.50.970">
    <property type="match status" value="2"/>
</dbReference>
<dbReference type="HAMAP" id="MF_00315">
    <property type="entry name" value="DXP_synth"/>
    <property type="match status" value="1"/>
</dbReference>
<dbReference type="InterPro" id="IPR005477">
    <property type="entry name" value="Dxylulose-5-P_synthase"/>
</dbReference>
<dbReference type="InterPro" id="IPR029061">
    <property type="entry name" value="THDP-binding"/>
</dbReference>
<dbReference type="InterPro" id="IPR009014">
    <property type="entry name" value="Transketo_C/PFOR_II"/>
</dbReference>
<dbReference type="InterPro" id="IPR005475">
    <property type="entry name" value="Transketolase-like_Pyr-bd"/>
</dbReference>
<dbReference type="InterPro" id="IPR020826">
    <property type="entry name" value="Transketolase_BS"/>
</dbReference>
<dbReference type="InterPro" id="IPR033248">
    <property type="entry name" value="Transketolase_C"/>
</dbReference>
<dbReference type="InterPro" id="IPR049557">
    <property type="entry name" value="Transketolase_CS"/>
</dbReference>
<dbReference type="NCBIfam" id="TIGR00204">
    <property type="entry name" value="dxs"/>
    <property type="match status" value="1"/>
</dbReference>
<dbReference type="NCBIfam" id="NF003933">
    <property type="entry name" value="PRK05444.2-2"/>
    <property type="match status" value="1"/>
</dbReference>
<dbReference type="PANTHER" id="PTHR43322">
    <property type="entry name" value="1-D-DEOXYXYLULOSE 5-PHOSPHATE SYNTHASE-RELATED"/>
    <property type="match status" value="1"/>
</dbReference>
<dbReference type="PANTHER" id="PTHR43322:SF5">
    <property type="entry name" value="1-DEOXY-D-XYLULOSE-5-PHOSPHATE SYNTHASE, CHLOROPLASTIC"/>
    <property type="match status" value="1"/>
</dbReference>
<dbReference type="Pfam" id="PF13292">
    <property type="entry name" value="DXP_synthase_N"/>
    <property type="match status" value="1"/>
</dbReference>
<dbReference type="Pfam" id="PF02779">
    <property type="entry name" value="Transket_pyr"/>
    <property type="match status" value="1"/>
</dbReference>
<dbReference type="Pfam" id="PF02780">
    <property type="entry name" value="Transketolase_C"/>
    <property type="match status" value="1"/>
</dbReference>
<dbReference type="SMART" id="SM00861">
    <property type="entry name" value="Transket_pyr"/>
    <property type="match status" value="1"/>
</dbReference>
<dbReference type="SUPFAM" id="SSF52518">
    <property type="entry name" value="Thiamin diphosphate-binding fold (THDP-binding)"/>
    <property type="match status" value="2"/>
</dbReference>
<dbReference type="SUPFAM" id="SSF52922">
    <property type="entry name" value="TK C-terminal domain-like"/>
    <property type="match status" value="1"/>
</dbReference>
<dbReference type="PROSITE" id="PS00801">
    <property type="entry name" value="TRANSKETOLASE_1"/>
    <property type="match status" value="1"/>
</dbReference>
<dbReference type="PROSITE" id="PS00802">
    <property type="entry name" value="TRANSKETOLASE_2"/>
    <property type="match status" value="1"/>
</dbReference>
<organism>
    <name type="scientific">Colwellia psychrerythraea (strain 34H / ATCC BAA-681)</name>
    <name type="common">Vibrio psychroerythus</name>
    <dbReference type="NCBI Taxonomy" id="167879"/>
    <lineage>
        <taxon>Bacteria</taxon>
        <taxon>Pseudomonadati</taxon>
        <taxon>Pseudomonadota</taxon>
        <taxon>Gammaproteobacteria</taxon>
        <taxon>Alteromonadales</taxon>
        <taxon>Colwelliaceae</taxon>
        <taxon>Colwellia</taxon>
    </lineage>
</organism>
<proteinExistence type="inferred from homology"/>
<evidence type="ECO:0000255" key="1">
    <source>
        <dbReference type="HAMAP-Rule" id="MF_00315"/>
    </source>
</evidence>